<organism>
    <name type="scientific">Escherichia coli O6:H1 (strain CFT073 / ATCC 700928 / UPEC)</name>
    <dbReference type="NCBI Taxonomy" id="199310"/>
    <lineage>
        <taxon>Bacteria</taxon>
        <taxon>Pseudomonadati</taxon>
        <taxon>Pseudomonadota</taxon>
        <taxon>Gammaproteobacteria</taxon>
        <taxon>Enterobacterales</taxon>
        <taxon>Enterobacteriaceae</taxon>
        <taxon>Escherichia</taxon>
    </lineage>
</organism>
<evidence type="ECO:0000250" key="1"/>
<evidence type="ECO:0000255" key="2">
    <source>
        <dbReference type="PROSITE-ProRule" id="PRU01246"/>
    </source>
</evidence>
<evidence type="ECO:0000305" key="3"/>
<name>FIME_ECOL6</name>
<keyword id="KW-0229">DNA integration</keyword>
<keyword id="KW-0233">DNA recombination</keyword>
<keyword id="KW-1029">Fimbrium biogenesis</keyword>
<keyword id="KW-1185">Reference proteome</keyword>
<keyword id="KW-0804">Transcription</keyword>
<keyword id="KW-0805">Transcription regulation</keyword>
<protein>
    <recommendedName>
        <fullName>Type 1 fimbriae regulatory protein FimE</fullName>
    </recommendedName>
</protein>
<reference key="1">
    <citation type="journal article" date="2002" name="Proc. Natl. Acad. Sci. U.S.A.">
        <title>Extensive mosaic structure revealed by the complete genome sequence of uropathogenic Escherichia coli.</title>
        <authorList>
            <person name="Welch R.A."/>
            <person name="Burland V."/>
            <person name="Plunkett G. III"/>
            <person name="Redford P."/>
            <person name="Roesch P."/>
            <person name="Rasko D."/>
            <person name="Buckles E.L."/>
            <person name="Liou S.-R."/>
            <person name="Boutin A."/>
            <person name="Hackett J."/>
            <person name="Stroud D."/>
            <person name="Mayhew G.F."/>
            <person name="Rose D.J."/>
            <person name="Zhou S."/>
            <person name="Schwartz D.C."/>
            <person name="Perna N.T."/>
            <person name="Mobley H.L.T."/>
            <person name="Donnenberg M.S."/>
            <person name="Blattner F.R."/>
        </authorList>
    </citation>
    <scope>NUCLEOTIDE SEQUENCE [LARGE SCALE GENOMIC DNA]</scope>
    <source>
        <strain>CFT073 / ATCC 700928 / UPEC</strain>
    </source>
</reference>
<sequence length="198" mass="23116">MSKRRYLTGKEVQAMMQAVCYGATGARDYCLILLAYRHGMRISELLDLHYQDLDLNEGRINIRRLKNGFSTVHPLRFDEREAVERWTQERANWKGADRTDAIFISRRGSRLSRQQAYRIIRDAGIEAGTVTQTHPHMLRHACGYELAERGADTRLIQDYLGHRNIRHTVRYTASNAARFAGLWERNNLINEKLKREEV</sequence>
<proteinExistence type="inferred from homology"/>
<gene>
    <name type="primary">fimE</name>
    <name type="ordered locus">c5392</name>
</gene>
<comment type="function">
    <text evidence="1">FimE is one of the 2 regulatory proteins which control the phase variation of type 1 fimbriae in E.coli. These proteins mediate the periodic inversion of a 300bp DNA segment that harbors the promoter for the fimbrial structural gene, fimA. FimE switches fimA off (By similarity).</text>
</comment>
<comment type="similarity">
    <text evidence="3">Belongs to the 'phage' integrase family.</text>
</comment>
<dbReference type="EMBL" id="AE014075">
    <property type="protein sequence ID" value="AAN83814.1"/>
    <property type="molecule type" value="Genomic_DNA"/>
</dbReference>
<dbReference type="RefSeq" id="WP_000044711.1">
    <property type="nucleotide sequence ID" value="NZ_CP051263.1"/>
</dbReference>
<dbReference type="SMR" id="P0ADH8"/>
<dbReference type="STRING" id="199310.c5392"/>
<dbReference type="GeneID" id="75206127"/>
<dbReference type="KEGG" id="ecc:c5392"/>
<dbReference type="eggNOG" id="COG4974">
    <property type="taxonomic scope" value="Bacteria"/>
</dbReference>
<dbReference type="HOGENOM" id="CLU_027562_39_0_6"/>
<dbReference type="BioCyc" id="ECOL199310:C5392-MONOMER"/>
<dbReference type="Proteomes" id="UP000001410">
    <property type="component" value="Chromosome"/>
</dbReference>
<dbReference type="GO" id="GO:0003677">
    <property type="term" value="F:DNA binding"/>
    <property type="evidence" value="ECO:0007669"/>
    <property type="project" value="InterPro"/>
</dbReference>
<dbReference type="GO" id="GO:0015074">
    <property type="term" value="P:DNA integration"/>
    <property type="evidence" value="ECO:0007669"/>
    <property type="project" value="UniProtKB-KW"/>
</dbReference>
<dbReference type="GO" id="GO:0006310">
    <property type="term" value="P:DNA recombination"/>
    <property type="evidence" value="ECO:0007669"/>
    <property type="project" value="UniProtKB-KW"/>
</dbReference>
<dbReference type="FunFam" id="1.10.443.10:FF:000003">
    <property type="entry name" value="Type 1 fimbriae regulatory protein FimE"/>
    <property type="match status" value="1"/>
</dbReference>
<dbReference type="Gene3D" id="1.10.443.10">
    <property type="entry name" value="Intergrase catalytic core"/>
    <property type="match status" value="1"/>
</dbReference>
<dbReference type="InterPro" id="IPR011010">
    <property type="entry name" value="DNA_brk_join_enz"/>
</dbReference>
<dbReference type="InterPro" id="IPR013762">
    <property type="entry name" value="Integrase-like_cat_sf"/>
</dbReference>
<dbReference type="InterPro" id="IPR002104">
    <property type="entry name" value="Integrase_catalytic"/>
</dbReference>
<dbReference type="InterPro" id="IPR050090">
    <property type="entry name" value="Tyrosine_recombinase_XerCD"/>
</dbReference>
<dbReference type="NCBIfam" id="NF007370">
    <property type="entry name" value="PRK09870.1"/>
    <property type="match status" value="1"/>
</dbReference>
<dbReference type="NCBIfam" id="NF007371">
    <property type="entry name" value="PRK09871.1"/>
    <property type="match status" value="1"/>
</dbReference>
<dbReference type="PANTHER" id="PTHR30349">
    <property type="entry name" value="PHAGE INTEGRASE-RELATED"/>
    <property type="match status" value="1"/>
</dbReference>
<dbReference type="PANTHER" id="PTHR30349:SF62">
    <property type="entry name" value="TYPE 1 FIMBRIAE REGULATORY PROTEIN FIMB-RELATED"/>
    <property type="match status" value="1"/>
</dbReference>
<dbReference type="Pfam" id="PF00589">
    <property type="entry name" value="Phage_integrase"/>
    <property type="match status" value="1"/>
</dbReference>
<dbReference type="SUPFAM" id="SSF56349">
    <property type="entry name" value="DNA breaking-rejoining enzymes"/>
    <property type="match status" value="1"/>
</dbReference>
<dbReference type="PROSITE" id="PS51898">
    <property type="entry name" value="TYR_RECOMBINASE"/>
    <property type="match status" value="1"/>
</dbReference>
<accession>P0ADH8</accession>
<accession>P04741</accession>
<feature type="chain" id="PRO_0000197542" description="Type 1 fimbriae regulatory protein FimE">
    <location>
        <begin position="1"/>
        <end position="198"/>
    </location>
</feature>
<feature type="domain" description="Tyr recombinase" evidence="2">
    <location>
        <begin position="2"/>
        <end position="184"/>
    </location>
</feature>
<feature type="active site" evidence="2">
    <location>
        <position position="41"/>
    </location>
</feature>
<feature type="active site" evidence="2">
    <location>
        <position position="66"/>
    </location>
</feature>
<feature type="active site" evidence="2">
    <location>
        <position position="136"/>
    </location>
</feature>
<feature type="active site" evidence="2">
    <location>
        <position position="139"/>
    </location>
</feature>
<feature type="active site" evidence="2">
    <location>
        <position position="162"/>
    </location>
</feature>
<feature type="active site" description="O-(3'-phospho-DNA)-tyrosine intermediate" evidence="2">
    <location>
        <position position="171"/>
    </location>
</feature>